<accession>P63763</accession>
<accession>A0A1R3Y0G4</accession>
<accession>O06223</accession>
<accession>X2BJI2</accession>
<proteinExistence type="inferred from homology"/>
<organism>
    <name type="scientific">Mycobacterium bovis (strain ATCC BAA-935 / AF2122/97)</name>
    <dbReference type="NCBI Taxonomy" id="233413"/>
    <lineage>
        <taxon>Bacteria</taxon>
        <taxon>Bacillati</taxon>
        <taxon>Actinomycetota</taxon>
        <taxon>Actinomycetes</taxon>
        <taxon>Mycobacteriales</taxon>
        <taxon>Mycobacteriaceae</taxon>
        <taxon>Mycobacterium</taxon>
        <taxon>Mycobacterium tuberculosis complex</taxon>
    </lineage>
</organism>
<gene>
    <name type="primary">ftsW</name>
    <name type="ordered locus">BQ2027_MB2178C</name>
</gene>
<sequence>MLTRLLRRGTSDTDGSQTRGAEPVEGQRTGPEEASNPGSARPRTRFGAWLGRPMTSFHLIIAVAALLTTLGLIMVLSASAVRSYDDDGSAWVIFGKQVLWTLVGLIGGYVCLRMSVRFMRRIAFSGFAITIVMLVLVLVPGIGKEANGSRGWFVVAGFSMQPSELAKMAFAIWGAHLLAARRMERASLREMLIPLVPAAVVALALIVAQPDLGQTVSMGIILLGLLWYAGLPLRVFLSSLAAVVVSAAILAVSAGYRSDRVRSWLNPENDPQDSGYQARQAKFALAQGGIFGDGLGQGVAKWNYLPNAHNDFIFAIIGEELGLVGALGLLGLFGLFAYTGMRIASRSADPFLRLLTATTTLWVLGQAFINIGYVIGLLPVTGLQLPLISAGGTSTAATLSLIGIIANAARHEPEAVAALRAGRDDKVNRLLRLPLPEPYLPPRLEAFRDRKRANPQPAQTQPARKTPRTAPGQPARQMGLPPRPGSPRTADPPVRRSVHHGAGQRYAGQRRTRRVRALEGQRYG</sequence>
<feature type="chain" id="PRO_0000062726" description="Probable peptidoglycan glycosyltransferase FtsW">
    <location>
        <begin position="1"/>
        <end position="524"/>
    </location>
</feature>
<feature type="topological domain" description="Cytoplasmic" evidence="4">
    <location>
        <begin position="1"/>
        <end position="55"/>
    </location>
</feature>
<feature type="transmembrane region" description="Helical" evidence="4">
    <location>
        <begin position="56"/>
        <end position="76"/>
    </location>
</feature>
<feature type="topological domain" description="Extracellular" evidence="4">
    <location>
        <begin position="77"/>
        <end position="89"/>
    </location>
</feature>
<feature type="transmembrane region" description="Helical" evidence="4">
    <location>
        <begin position="90"/>
        <end position="110"/>
    </location>
</feature>
<feature type="topological domain" description="Cytoplasmic" evidence="4">
    <location>
        <begin position="111"/>
        <end position="121"/>
    </location>
</feature>
<feature type="transmembrane region" description="Helical" evidence="4">
    <location>
        <begin position="122"/>
        <end position="142"/>
    </location>
</feature>
<feature type="topological domain" description="Extracellular" evidence="4">
    <location>
        <begin position="143"/>
        <end position="151"/>
    </location>
</feature>
<feature type="transmembrane region" description="Helical" evidence="4">
    <location>
        <begin position="152"/>
        <end position="172"/>
    </location>
</feature>
<feature type="topological domain" description="Cytoplasmic" evidence="4">
    <location>
        <begin position="173"/>
        <end position="191"/>
    </location>
</feature>
<feature type="transmembrane region" description="Helical" evidence="4">
    <location>
        <begin position="192"/>
        <end position="212"/>
    </location>
</feature>
<feature type="transmembrane region" description="Helical" evidence="4">
    <location>
        <begin position="213"/>
        <end position="233"/>
    </location>
</feature>
<feature type="topological domain" description="Cytoplasmic" evidence="4">
    <location>
        <position position="234"/>
    </location>
</feature>
<feature type="transmembrane region" description="Helical" evidence="4">
    <location>
        <begin position="235"/>
        <end position="255"/>
    </location>
</feature>
<feature type="topological domain" description="Extracellular" evidence="4">
    <location>
        <begin position="256"/>
        <end position="311"/>
    </location>
</feature>
<feature type="transmembrane region" description="Helical" evidence="4">
    <location>
        <begin position="312"/>
        <end position="332"/>
    </location>
</feature>
<feature type="topological domain" description="Cytoplasmic" evidence="4">
    <location>
        <begin position="333"/>
        <end position="350"/>
    </location>
</feature>
<feature type="transmembrane region" description="Helical" evidence="4">
    <location>
        <begin position="351"/>
        <end position="373"/>
    </location>
</feature>
<feature type="topological domain" description="Extracellular" evidence="4">
    <location>
        <begin position="374"/>
        <end position="388"/>
    </location>
</feature>
<feature type="transmembrane region" description="Helical" evidence="4">
    <location>
        <begin position="389"/>
        <end position="409"/>
    </location>
</feature>
<feature type="topological domain" description="Cytoplasmic" evidence="4">
    <location>
        <begin position="410"/>
        <end position="524"/>
    </location>
</feature>
<feature type="region of interest" description="Disordered" evidence="5">
    <location>
        <begin position="1"/>
        <end position="42"/>
    </location>
</feature>
<feature type="region of interest" description="Disordered" evidence="5">
    <location>
        <begin position="448"/>
        <end position="524"/>
    </location>
</feature>
<dbReference type="EC" id="2.4.99.28" evidence="3"/>
<dbReference type="EMBL" id="LT708304">
    <property type="protein sequence ID" value="SIU00786.1"/>
    <property type="molecule type" value="Genomic_DNA"/>
</dbReference>
<dbReference type="RefSeq" id="NP_855827.1">
    <property type="nucleotide sequence ID" value="NC_002945.3"/>
</dbReference>
<dbReference type="RefSeq" id="WP_003411165.1">
    <property type="nucleotide sequence ID" value="NC_002945.4"/>
</dbReference>
<dbReference type="SMR" id="P63763"/>
<dbReference type="TCDB" id="2.A.103.1.4">
    <property type="family name" value="the bacterial murein precursor exporter (mpe) family"/>
</dbReference>
<dbReference type="KEGG" id="mbo:BQ2027_MB2178C"/>
<dbReference type="PATRIC" id="fig|233413.5.peg.2394"/>
<dbReference type="UniPathway" id="UPA00219"/>
<dbReference type="Proteomes" id="UP000001419">
    <property type="component" value="Chromosome"/>
</dbReference>
<dbReference type="GO" id="GO:0032153">
    <property type="term" value="C:cell division site"/>
    <property type="evidence" value="ECO:0007669"/>
    <property type="project" value="TreeGrafter"/>
</dbReference>
<dbReference type="GO" id="GO:0005886">
    <property type="term" value="C:plasma membrane"/>
    <property type="evidence" value="ECO:0007669"/>
    <property type="project" value="UniProtKB-SubCell"/>
</dbReference>
<dbReference type="GO" id="GO:0015648">
    <property type="term" value="F:lipid-linked peptidoglycan transporter activity"/>
    <property type="evidence" value="ECO:0007669"/>
    <property type="project" value="TreeGrafter"/>
</dbReference>
<dbReference type="GO" id="GO:0008955">
    <property type="term" value="F:peptidoglycan glycosyltransferase activity"/>
    <property type="evidence" value="ECO:0007669"/>
    <property type="project" value="RHEA"/>
</dbReference>
<dbReference type="GO" id="GO:0051301">
    <property type="term" value="P:cell division"/>
    <property type="evidence" value="ECO:0007669"/>
    <property type="project" value="UniProtKB-KW"/>
</dbReference>
<dbReference type="GO" id="GO:0071555">
    <property type="term" value="P:cell wall organization"/>
    <property type="evidence" value="ECO:0007669"/>
    <property type="project" value="UniProtKB-KW"/>
</dbReference>
<dbReference type="GO" id="GO:0009252">
    <property type="term" value="P:peptidoglycan biosynthetic process"/>
    <property type="evidence" value="ECO:0007669"/>
    <property type="project" value="UniProtKB-UniPathway"/>
</dbReference>
<dbReference type="GO" id="GO:0008360">
    <property type="term" value="P:regulation of cell shape"/>
    <property type="evidence" value="ECO:0007669"/>
    <property type="project" value="UniProtKB-KW"/>
</dbReference>
<dbReference type="InterPro" id="IPR018365">
    <property type="entry name" value="Cell_cycle_FtsW-rel_CS"/>
</dbReference>
<dbReference type="InterPro" id="IPR013437">
    <property type="entry name" value="FtsW"/>
</dbReference>
<dbReference type="InterPro" id="IPR001182">
    <property type="entry name" value="FtsW/RodA"/>
</dbReference>
<dbReference type="NCBIfam" id="TIGR02614">
    <property type="entry name" value="ftsW"/>
    <property type="match status" value="1"/>
</dbReference>
<dbReference type="PANTHER" id="PTHR30474">
    <property type="entry name" value="CELL CYCLE PROTEIN"/>
    <property type="match status" value="1"/>
</dbReference>
<dbReference type="PANTHER" id="PTHR30474:SF2">
    <property type="entry name" value="PEPTIDOGLYCAN GLYCOSYLTRANSFERASE FTSW-RELATED"/>
    <property type="match status" value="1"/>
</dbReference>
<dbReference type="Pfam" id="PF01098">
    <property type="entry name" value="FTSW_RODA_SPOVE"/>
    <property type="match status" value="1"/>
</dbReference>
<dbReference type="PROSITE" id="PS00428">
    <property type="entry name" value="FTSW_RODA_SPOVE"/>
    <property type="match status" value="1"/>
</dbReference>
<reference key="1">
    <citation type="journal article" date="2003" name="Proc. Natl. Acad. Sci. U.S.A.">
        <title>The complete genome sequence of Mycobacterium bovis.</title>
        <authorList>
            <person name="Garnier T."/>
            <person name="Eiglmeier K."/>
            <person name="Camus J.-C."/>
            <person name="Medina N."/>
            <person name="Mansoor H."/>
            <person name="Pryor M."/>
            <person name="Duthoy S."/>
            <person name="Grondin S."/>
            <person name="Lacroix C."/>
            <person name="Monsempe C."/>
            <person name="Simon S."/>
            <person name="Harris B."/>
            <person name="Atkin R."/>
            <person name="Doggett J."/>
            <person name="Mayes R."/>
            <person name="Keating L."/>
            <person name="Wheeler P.R."/>
            <person name="Parkhill J."/>
            <person name="Barrell B.G."/>
            <person name="Cole S.T."/>
            <person name="Gordon S.V."/>
            <person name="Hewinson R.G."/>
        </authorList>
    </citation>
    <scope>NUCLEOTIDE SEQUENCE [LARGE SCALE GENOMIC DNA]</scope>
    <source>
        <strain>ATCC BAA-935 / AF2122/97</strain>
    </source>
</reference>
<reference key="2">
    <citation type="journal article" date="2017" name="Genome Announc.">
        <title>Updated reference genome sequence and annotation of Mycobacterium bovis AF2122/97.</title>
        <authorList>
            <person name="Malone K.M."/>
            <person name="Farrell D."/>
            <person name="Stuber T.P."/>
            <person name="Schubert O.T."/>
            <person name="Aebersold R."/>
            <person name="Robbe-Austerman S."/>
            <person name="Gordon S.V."/>
        </authorList>
    </citation>
    <scope>NUCLEOTIDE SEQUENCE [LARGE SCALE GENOMIC DNA]</scope>
    <scope>GENOME REANNOTATION</scope>
    <source>
        <strain>ATCC BAA-935 / AF2122/97</strain>
    </source>
</reference>
<comment type="function">
    <text evidence="3">Peptidoglycan polymerase that is essential for cell division.</text>
</comment>
<comment type="catalytic activity">
    <reaction evidence="3">
        <text>[GlcNAc-(1-&gt;4)-Mur2Ac(oyl-L-Ala-gamma-D-Glu-L-Lys-D-Ala-D-Ala)](n)-di-trans,octa-cis-undecaprenyl diphosphate + beta-D-GlcNAc-(1-&gt;4)-Mur2Ac(oyl-L-Ala-gamma-D-Glu-L-Lys-D-Ala-D-Ala)-di-trans,octa-cis-undecaprenyl diphosphate = [GlcNAc-(1-&gt;4)-Mur2Ac(oyl-L-Ala-gamma-D-Glu-L-Lys-D-Ala-D-Ala)](n+1)-di-trans,octa-cis-undecaprenyl diphosphate + di-trans,octa-cis-undecaprenyl diphosphate + H(+)</text>
        <dbReference type="Rhea" id="RHEA:23708"/>
        <dbReference type="Rhea" id="RHEA-COMP:9602"/>
        <dbReference type="Rhea" id="RHEA-COMP:9603"/>
        <dbReference type="ChEBI" id="CHEBI:15378"/>
        <dbReference type="ChEBI" id="CHEBI:58405"/>
        <dbReference type="ChEBI" id="CHEBI:60033"/>
        <dbReference type="ChEBI" id="CHEBI:78435"/>
        <dbReference type="EC" id="2.4.99.28"/>
    </reaction>
</comment>
<comment type="pathway">
    <text evidence="3">Cell wall biogenesis; peptidoglycan biosynthesis.</text>
</comment>
<comment type="subcellular location">
    <subcellularLocation>
        <location evidence="1">Cell membrane</location>
        <topology evidence="4">Multi-pass membrane protein</topology>
    </subcellularLocation>
    <text evidence="1">Localizes to the division septum.</text>
</comment>
<comment type="similarity">
    <text evidence="6">Belongs to the SEDS family. FtsW subfamily.</text>
</comment>
<protein>
    <recommendedName>
        <fullName evidence="3">Probable peptidoglycan glycosyltransferase FtsW</fullName>
        <shortName evidence="3">PGT</shortName>
        <ecNumber evidence="3">2.4.99.28</ecNumber>
    </recommendedName>
    <alternativeName>
        <fullName evidence="2">Cell division protein FtsW</fullName>
    </alternativeName>
    <alternativeName>
        <fullName evidence="3">Cell wall polymerase</fullName>
    </alternativeName>
    <alternativeName>
        <fullName evidence="3">Peptidoglycan polymerase</fullName>
        <shortName evidence="3">PG polymerase</shortName>
    </alternativeName>
</protein>
<keyword id="KW-0131">Cell cycle</keyword>
<keyword id="KW-0132">Cell division</keyword>
<keyword id="KW-1003">Cell membrane</keyword>
<keyword id="KW-0133">Cell shape</keyword>
<keyword id="KW-0961">Cell wall biogenesis/degradation</keyword>
<keyword id="KW-0328">Glycosyltransferase</keyword>
<keyword id="KW-0472">Membrane</keyword>
<keyword id="KW-0573">Peptidoglycan synthesis</keyword>
<keyword id="KW-1185">Reference proteome</keyword>
<keyword id="KW-0808">Transferase</keyword>
<keyword id="KW-0812">Transmembrane</keyword>
<keyword id="KW-1133">Transmembrane helix</keyword>
<evidence type="ECO:0000250" key="1"/>
<evidence type="ECO:0000250" key="2">
    <source>
        <dbReference type="UniProtKB" id="O07639"/>
    </source>
</evidence>
<evidence type="ECO:0000250" key="3">
    <source>
        <dbReference type="UniProtKB" id="P39604"/>
    </source>
</evidence>
<evidence type="ECO:0000255" key="4"/>
<evidence type="ECO:0000256" key="5">
    <source>
        <dbReference type="SAM" id="MobiDB-lite"/>
    </source>
</evidence>
<evidence type="ECO:0000305" key="6"/>
<name>FTSW_MYCBO</name>